<sequence>MSARIRIRNALAGEGLGNEIMVKGWVRTIRTGKEVAFLALNDGSCFANLQVVAEPGLATFADVCAIGTGAAVAVRGRLVDSPASGQCYELHADEVAVIGLADESYPLQKKRHSFEYLRSIAHLRPRSNTFGAVFRVRSSVAQAVHRFFAERGFLYVHTPIITTSDCEGAGEMFRVTTLDPAAPPLLEGEVDFSRDFFAAQAGLTVSGQLEGELFAQAFSDIYTFGPTFRAENSNTPRHAAEFWMIEPEMAFADLMADAALAEEFFRYLCRHVLDACGEDMAFFNDHIDKGLIARVEQVANSSFAIMEYGEAIERLKKATVTFEYPVEWGLDLQTEHERYLTEQVVGGPVFVINYPKHIKAFYMRVNDDNKTVAAMDLLVPKVGEIIGGSQREERLPVLEGRMAEVGVNPEGLWWYLDSRRWGSTPHAGFGLGFERLIMYLTGMENIRDVIPFPRTPRHAEF</sequence>
<organism>
    <name type="scientific">Geobacter metallireducens (strain ATCC 53774 / DSM 7210 / GS-15)</name>
    <dbReference type="NCBI Taxonomy" id="269799"/>
    <lineage>
        <taxon>Bacteria</taxon>
        <taxon>Pseudomonadati</taxon>
        <taxon>Thermodesulfobacteriota</taxon>
        <taxon>Desulfuromonadia</taxon>
        <taxon>Geobacterales</taxon>
        <taxon>Geobacteraceae</taxon>
        <taxon>Geobacter</taxon>
    </lineage>
</organism>
<name>SYN_GEOMG</name>
<protein>
    <recommendedName>
        <fullName evidence="1">Asparagine--tRNA ligase</fullName>
        <ecNumber evidence="1">6.1.1.22</ecNumber>
    </recommendedName>
    <alternativeName>
        <fullName evidence="1">Asparaginyl-tRNA synthetase</fullName>
        <shortName evidence="1">AsnRS</shortName>
    </alternativeName>
</protein>
<gene>
    <name evidence="1" type="primary">asnS</name>
    <name type="ordered locus">Gmet_2412</name>
</gene>
<proteinExistence type="inferred from homology"/>
<accession>Q39SY7</accession>
<evidence type="ECO:0000255" key="1">
    <source>
        <dbReference type="HAMAP-Rule" id="MF_00534"/>
    </source>
</evidence>
<comment type="catalytic activity">
    <reaction evidence="1">
        <text>tRNA(Asn) + L-asparagine + ATP = L-asparaginyl-tRNA(Asn) + AMP + diphosphate + H(+)</text>
        <dbReference type="Rhea" id="RHEA:11180"/>
        <dbReference type="Rhea" id="RHEA-COMP:9659"/>
        <dbReference type="Rhea" id="RHEA-COMP:9674"/>
        <dbReference type="ChEBI" id="CHEBI:15378"/>
        <dbReference type="ChEBI" id="CHEBI:30616"/>
        <dbReference type="ChEBI" id="CHEBI:33019"/>
        <dbReference type="ChEBI" id="CHEBI:58048"/>
        <dbReference type="ChEBI" id="CHEBI:78442"/>
        <dbReference type="ChEBI" id="CHEBI:78515"/>
        <dbReference type="ChEBI" id="CHEBI:456215"/>
        <dbReference type="EC" id="6.1.1.22"/>
    </reaction>
</comment>
<comment type="subunit">
    <text evidence="1">Homodimer.</text>
</comment>
<comment type="subcellular location">
    <subcellularLocation>
        <location evidence="1">Cytoplasm</location>
    </subcellularLocation>
</comment>
<comment type="similarity">
    <text evidence="1">Belongs to the class-II aminoacyl-tRNA synthetase family.</text>
</comment>
<reference key="1">
    <citation type="journal article" date="2009" name="BMC Microbiol.">
        <title>The genome sequence of Geobacter metallireducens: features of metabolism, physiology and regulation common and dissimilar to Geobacter sulfurreducens.</title>
        <authorList>
            <person name="Aklujkar M."/>
            <person name="Krushkal J."/>
            <person name="DiBartolo G."/>
            <person name="Lapidus A."/>
            <person name="Land M.L."/>
            <person name="Lovley D.R."/>
        </authorList>
    </citation>
    <scope>NUCLEOTIDE SEQUENCE [LARGE SCALE GENOMIC DNA]</scope>
    <source>
        <strain>ATCC 53774 / DSM 7210 / GS-15</strain>
    </source>
</reference>
<dbReference type="EC" id="6.1.1.22" evidence="1"/>
<dbReference type="EMBL" id="CP000148">
    <property type="protein sequence ID" value="ABB32637.1"/>
    <property type="molecule type" value="Genomic_DNA"/>
</dbReference>
<dbReference type="RefSeq" id="WP_004512488.1">
    <property type="nucleotide sequence ID" value="NC_007517.1"/>
</dbReference>
<dbReference type="SMR" id="Q39SY7"/>
<dbReference type="STRING" id="269799.Gmet_2412"/>
<dbReference type="KEGG" id="gme:Gmet_2412"/>
<dbReference type="eggNOG" id="COG0017">
    <property type="taxonomic scope" value="Bacteria"/>
</dbReference>
<dbReference type="HOGENOM" id="CLU_004553_2_0_7"/>
<dbReference type="Proteomes" id="UP000007073">
    <property type="component" value="Chromosome"/>
</dbReference>
<dbReference type="GO" id="GO:0005737">
    <property type="term" value="C:cytoplasm"/>
    <property type="evidence" value="ECO:0007669"/>
    <property type="project" value="UniProtKB-SubCell"/>
</dbReference>
<dbReference type="GO" id="GO:0004816">
    <property type="term" value="F:asparagine-tRNA ligase activity"/>
    <property type="evidence" value="ECO:0007669"/>
    <property type="project" value="UniProtKB-UniRule"/>
</dbReference>
<dbReference type="GO" id="GO:0005524">
    <property type="term" value="F:ATP binding"/>
    <property type="evidence" value="ECO:0007669"/>
    <property type="project" value="UniProtKB-UniRule"/>
</dbReference>
<dbReference type="GO" id="GO:0003676">
    <property type="term" value="F:nucleic acid binding"/>
    <property type="evidence" value="ECO:0007669"/>
    <property type="project" value="InterPro"/>
</dbReference>
<dbReference type="GO" id="GO:0006421">
    <property type="term" value="P:asparaginyl-tRNA aminoacylation"/>
    <property type="evidence" value="ECO:0007669"/>
    <property type="project" value="UniProtKB-UniRule"/>
</dbReference>
<dbReference type="CDD" id="cd00776">
    <property type="entry name" value="AsxRS_core"/>
    <property type="match status" value="1"/>
</dbReference>
<dbReference type="CDD" id="cd04318">
    <property type="entry name" value="EcAsnRS_like_N"/>
    <property type="match status" value="1"/>
</dbReference>
<dbReference type="FunFam" id="3.30.930.10:FF:000016">
    <property type="entry name" value="Asparagine--tRNA ligase"/>
    <property type="match status" value="1"/>
</dbReference>
<dbReference type="Gene3D" id="3.30.930.10">
    <property type="entry name" value="Bira Bifunctional Protein, Domain 2"/>
    <property type="match status" value="1"/>
</dbReference>
<dbReference type="Gene3D" id="2.40.50.140">
    <property type="entry name" value="Nucleic acid-binding proteins"/>
    <property type="match status" value="1"/>
</dbReference>
<dbReference type="HAMAP" id="MF_00534">
    <property type="entry name" value="Asn_tRNA_synth"/>
    <property type="match status" value="1"/>
</dbReference>
<dbReference type="InterPro" id="IPR004364">
    <property type="entry name" value="Aa-tRNA-synt_II"/>
</dbReference>
<dbReference type="InterPro" id="IPR006195">
    <property type="entry name" value="aa-tRNA-synth_II"/>
</dbReference>
<dbReference type="InterPro" id="IPR045864">
    <property type="entry name" value="aa-tRNA-synth_II/BPL/LPL"/>
</dbReference>
<dbReference type="InterPro" id="IPR004522">
    <property type="entry name" value="Asn-tRNA-ligase"/>
</dbReference>
<dbReference type="InterPro" id="IPR002312">
    <property type="entry name" value="Asp/Asn-tRNA-synth_IIb"/>
</dbReference>
<dbReference type="InterPro" id="IPR012340">
    <property type="entry name" value="NA-bd_OB-fold"/>
</dbReference>
<dbReference type="InterPro" id="IPR004365">
    <property type="entry name" value="NA-bd_OB_tRNA"/>
</dbReference>
<dbReference type="NCBIfam" id="TIGR00457">
    <property type="entry name" value="asnS"/>
    <property type="match status" value="1"/>
</dbReference>
<dbReference type="NCBIfam" id="NF003037">
    <property type="entry name" value="PRK03932.1"/>
    <property type="match status" value="1"/>
</dbReference>
<dbReference type="PANTHER" id="PTHR22594:SF34">
    <property type="entry name" value="ASPARAGINE--TRNA LIGASE, MITOCHONDRIAL-RELATED"/>
    <property type="match status" value="1"/>
</dbReference>
<dbReference type="PANTHER" id="PTHR22594">
    <property type="entry name" value="ASPARTYL/LYSYL-TRNA SYNTHETASE"/>
    <property type="match status" value="1"/>
</dbReference>
<dbReference type="Pfam" id="PF00152">
    <property type="entry name" value="tRNA-synt_2"/>
    <property type="match status" value="1"/>
</dbReference>
<dbReference type="Pfam" id="PF01336">
    <property type="entry name" value="tRNA_anti-codon"/>
    <property type="match status" value="1"/>
</dbReference>
<dbReference type="PRINTS" id="PR01042">
    <property type="entry name" value="TRNASYNTHASP"/>
</dbReference>
<dbReference type="SUPFAM" id="SSF55681">
    <property type="entry name" value="Class II aaRS and biotin synthetases"/>
    <property type="match status" value="1"/>
</dbReference>
<dbReference type="SUPFAM" id="SSF50249">
    <property type="entry name" value="Nucleic acid-binding proteins"/>
    <property type="match status" value="1"/>
</dbReference>
<dbReference type="PROSITE" id="PS50862">
    <property type="entry name" value="AA_TRNA_LIGASE_II"/>
    <property type="match status" value="1"/>
</dbReference>
<keyword id="KW-0030">Aminoacyl-tRNA synthetase</keyword>
<keyword id="KW-0067">ATP-binding</keyword>
<keyword id="KW-0963">Cytoplasm</keyword>
<keyword id="KW-0436">Ligase</keyword>
<keyword id="KW-0547">Nucleotide-binding</keyword>
<keyword id="KW-0648">Protein biosynthesis</keyword>
<keyword id="KW-1185">Reference proteome</keyword>
<feature type="chain" id="PRO_1000051394" description="Asparagine--tRNA ligase">
    <location>
        <begin position="1"/>
        <end position="461"/>
    </location>
</feature>